<reference key="1">
    <citation type="submission" date="2006-03" db="EMBL/GenBank/DDBJ databases">
        <title>Complete sequence of chromosome of Psychrobacter cryohalolentis K5.</title>
        <authorList>
            <consortium name="US DOE Joint Genome Institute"/>
            <person name="Copeland A."/>
            <person name="Lucas S."/>
            <person name="Lapidus A."/>
            <person name="Barry K."/>
            <person name="Detter J.C."/>
            <person name="Glavina T."/>
            <person name="Hammon N."/>
            <person name="Israni S."/>
            <person name="Dalin E."/>
            <person name="Tice H."/>
            <person name="Pitluck S."/>
            <person name="Brettin T."/>
            <person name="Bruce D."/>
            <person name="Han C."/>
            <person name="Tapia R."/>
            <person name="Sims D.R."/>
            <person name="Gilna P."/>
            <person name="Schmutz J."/>
            <person name="Larimer F."/>
            <person name="Land M."/>
            <person name="Hauser L."/>
            <person name="Kyrpides N."/>
            <person name="Kim E."/>
            <person name="Richardson P."/>
        </authorList>
    </citation>
    <scope>NUCLEOTIDE SEQUENCE [LARGE SCALE GENOMIC DNA]</scope>
    <source>
        <strain>ATCC BAA-1226 / DSM 17306 / VKM B-2378 / K5</strain>
    </source>
</reference>
<feature type="chain" id="PRO_1000010822" description="Elongation factor P">
    <location>
        <begin position="1"/>
        <end position="190"/>
    </location>
</feature>
<feature type="modified residue" description="N6-(3,6-diaminohexanoyl)-5-hydroxylysine" evidence="1">
    <location>
        <position position="34"/>
    </location>
</feature>
<name>EFP_PSYCK</name>
<sequence>MASFSTNEFKSGLKVMLDGNPCAILENEFVKPGKGQAFNRVKLRNLRSGKVLEQTFKSGDSLEAADVMDTEMNYLYNDGEFWHFMHPESFEQIQADKTAMSDSIKWLKENSNALCTITLFNGAPLSVTPPNFVELQITETDPGVRGDTSGGGGKPATLETGAVVRVPLFVQQGEVVRVDTRTGDYQTRVS</sequence>
<accession>Q1Q9C6</accession>
<evidence type="ECO:0000255" key="1">
    <source>
        <dbReference type="HAMAP-Rule" id="MF_00141"/>
    </source>
</evidence>
<organism>
    <name type="scientific">Psychrobacter cryohalolentis (strain ATCC BAA-1226 / DSM 17306 / VKM B-2378 / K5)</name>
    <dbReference type="NCBI Taxonomy" id="335284"/>
    <lineage>
        <taxon>Bacteria</taxon>
        <taxon>Pseudomonadati</taxon>
        <taxon>Pseudomonadota</taxon>
        <taxon>Gammaproteobacteria</taxon>
        <taxon>Moraxellales</taxon>
        <taxon>Moraxellaceae</taxon>
        <taxon>Psychrobacter</taxon>
    </lineage>
</organism>
<protein>
    <recommendedName>
        <fullName evidence="1">Elongation factor P</fullName>
        <shortName evidence="1">EF-P</shortName>
    </recommendedName>
</protein>
<dbReference type="EMBL" id="CP000323">
    <property type="protein sequence ID" value="ABE75727.1"/>
    <property type="molecule type" value="Genomic_DNA"/>
</dbReference>
<dbReference type="RefSeq" id="WP_011514270.1">
    <property type="nucleotide sequence ID" value="NC_007969.1"/>
</dbReference>
<dbReference type="SMR" id="Q1Q9C6"/>
<dbReference type="STRING" id="335284.Pcryo_1950"/>
<dbReference type="KEGG" id="pcr:Pcryo_1950"/>
<dbReference type="eggNOG" id="COG0231">
    <property type="taxonomic scope" value="Bacteria"/>
</dbReference>
<dbReference type="HOGENOM" id="CLU_074944_0_0_6"/>
<dbReference type="UniPathway" id="UPA00345"/>
<dbReference type="Proteomes" id="UP000002425">
    <property type="component" value="Chromosome"/>
</dbReference>
<dbReference type="GO" id="GO:0005737">
    <property type="term" value="C:cytoplasm"/>
    <property type="evidence" value="ECO:0007669"/>
    <property type="project" value="UniProtKB-SubCell"/>
</dbReference>
<dbReference type="GO" id="GO:0003746">
    <property type="term" value="F:translation elongation factor activity"/>
    <property type="evidence" value="ECO:0007669"/>
    <property type="project" value="UniProtKB-UniRule"/>
</dbReference>
<dbReference type="GO" id="GO:0043043">
    <property type="term" value="P:peptide biosynthetic process"/>
    <property type="evidence" value="ECO:0007669"/>
    <property type="project" value="InterPro"/>
</dbReference>
<dbReference type="CDD" id="cd04470">
    <property type="entry name" value="S1_EF-P_repeat_1"/>
    <property type="match status" value="1"/>
</dbReference>
<dbReference type="CDD" id="cd05794">
    <property type="entry name" value="S1_EF-P_repeat_2"/>
    <property type="match status" value="1"/>
</dbReference>
<dbReference type="FunFam" id="2.30.30.30:FF:000003">
    <property type="entry name" value="Elongation factor P"/>
    <property type="match status" value="1"/>
</dbReference>
<dbReference type="FunFam" id="2.40.50.140:FF:000004">
    <property type="entry name" value="Elongation factor P"/>
    <property type="match status" value="1"/>
</dbReference>
<dbReference type="FunFam" id="2.40.50.140:FF:000009">
    <property type="entry name" value="Elongation factor P"/>
    <property type="match status" value="1"/>
</dbReference>
<dbReference type="Gene3D" id="2.30.30.30">
    <property type="match status" value="1"/>
</dbReference>
<dbReference type="Gene3D" id="2.40.50.140">
    <property type="entry name" value="Nucleic acid-binding proteins"/>
    <property type="match status" value="2"/>
</dbReference>
<dbReference type="HAMAP" id="MF_00141">
    <property type="entry name" value="EF_P"/>
    <property type="match status" value="1"/>
</dbReference>
<dbReference type="InterPro" id="IPR015365">
    <property type="entry name" value="Elong-fact-P_C"/>
</dbReference>
<dbReference type="InterPro" id="IPR012340">
    <property type="entry name" value="NA-bd_OB-fold"/>
</dbReference>
<dbReference type="InterPro" id="IPR014722">
    <property type="entry name" value="Rib_uL2_dom2"/>
</dbReference>
<dbReference type="InterPro" id="IPR020599">
    <property type="entry name" value="Transl_elong_fac_P/YeiP"/>
</dbReference>
<dbReference type="InterPro" id="IPR013185">
    <property type="entry name" value="Transl_elong_KOW-like"/>
</dbReference>
<dbReference type="InterPro" id="IPR001059">
    <property type="entry name" value="Transl_elong_P/YeiP_cen"/>
</dbReference>
<dbReference type="InterPro" id="IPR013852">
    <property type="entry name" value="Transl_elong_P/YeiP_CS"/>
</dbReference>
<dbReference type="InterPro" id="IPR011768">
    <property type="entry name" value="Transl_elongation_fac_P"/>
</dbReference>
<dbReference type="InterPro" id="IPR008991">
    <property type="entry name" value="Translation_prot_SH3-like_sf"/>
</dbReference>
<dbReference type="NCBIfam" id="TIGR00038">
    <property type="entry name" value="efp"/>
    <property type="match status" value="1"/>
</dbReference>
<dbReference type="NCBIfam" id="NF001810">
    <property type="entry name" value="PRK00529.1"/>
    <property type="match status" value="1"/>
</dbReference>
<dbReference type="PANTHER" id="PTHR30053">
    <property type="entry name" value="ELONGATION FACTOR P"/>
    <property type="match status" value="1"/>
</dbReference>
<dbReference type="PANTHER" id="PTHR30053:SF12">
    <property type="entry name" value="ELONGATION FACTOR P (EF-P) FAMILY PROTEIN"/>
    <property type="match status" value="1"/>
</dbReference>
<dbReference type="Pfam" id="PF01132">
    <property type="entry name" value="EFP"/>
    <property type="match status" value="1"/>
</dbReference>
<dbReference type="Pfam" id="PF08207">
    <property type="entry name" value="EFP_N"/>
    <property type="match status" value="1"/>
</dbReference>
<dbReference type="Pfam" id="PF09285">
    <property type="entry name" value="Elong-fact-P_C"/>
    <property type="match status" value="1"/>
</dbReference>
<dbReference type="PIRSF" id="PIRSF005901">
    <property type="entry name" value="EF-P"/>
    <property type="match status" value="1"/>
</dbReference>
<dbReference type="SMART" id="SM01185">
    <property type="entry name" value="EFP"/>
    <property type="match status" value="1"/>
</dbReference>
<dbReference type="SMART" id="SM00841">
    <property type="entry name" value="Elong-fact-P_C"/>
    <property type="match status" value="1"/>
</dbReference>
<dbReference type="SUPFAM" id="SSF50249">
    <property type="entry name" value="Nucleic acid-binding proteins"/>
    <property type="match status" value="2"/>
</dbReference>
<dbReference type="SUPFAM" id="SSF50104">
    <property type="entry name" value="Translation proteins SH3-like domain"/>
    <property type="match status" value="1"/>
</dbReference>
<dbReference type="PROSITE" id="PS01275">
    <property type="entry name" value="EFP"/>
    <property type="match status" value="1"/>
</dbReference>
<keyword id="KW-0963">Cytoplasm</keyword>
<keyword id="KW-0251">Elongation factor</keyword>
<keyword id="KW-0379">Hydroxylation</keyword>
<keyword id="KW-0648">Protein biosynthesis</keyword>
<proteinExistence type="inferred from homology"/>
<gene>
    <name evidence="1" type="primary">efp</name>
    <name type="ordered locus">Pcryo_1950</name>
</gene>
<comment type="function">
    <text evidence="1">Involved in peptide bond synthesis. Alleviates ribosome stalling that occurs when 3 or more consecutive Pro residues or the sequence PPG is present in a protein, possibly by augmenting the peptidyl transferase activity of the ribosome. Modification of Lys-34 is required for alleviation.</text>
</comment>
<comment type="pathway">
    <text evidence="1">Protein biosynthesis; polypeptide chain elongation.</text>
</comment>
<comment type="subcellular location">
    <subcellularLocation>
        <location evidence="1">Cytoplasm</location>
    </subcellularLocation>
</comment>
<comment type="PTM">
    <text evidence="1">May be beta-lysylated on the epsilon-amino group of Lys-34 by the combined action of EpmA and EpmB, and then hydroxylated on the C5 position of the same residue by EpmC (if this protein is present). Lysylation is critical for the stimulatory effect of EF-P on peptide-bond formation. The lysylation moiety may extend toward the peptidyltransferase center and stabilize the terminal 3-CCA end of the tRNA. Hydroxylation of the C5 position on Lys-34 may allow additional potential stabilizing hydrogen-bond interactions with the P-tRNA.</text>
</comment>
<comment type="similarity">
    <text evidence="1">Belongs to the elongation factor P family.</text>
</comment>